<organism>
    <name type="scientific">Synechococcus sp. (strain WH7803)</name>
    <dbReference type="NCBI Taxonomy" id="32051"/>
    <lineage>
        <taxon>Bacteria</taxon>
        <taxon>Bacillati</taxon>
        <taxon>Cyanobacteriota</taxon>
        <taxon>Cyanophyceae</taxon>
        <taxon>Synechococcales</taxon>
        <taxon>Synechococcaceae</taxon>
        <taxon>Synechococcus</taxon>
    </lineage>
</organism>
<reference key="1">
    <citation type="submission" date="2006-05" db="EMBL/GenBank/DDBJ databases">
        <authorList>
            <consortium name="Genoscope"/>
        </authorList>
    </citation>
    <scope>NUCLEOTIDE SEQUENCE [LARGE SCALE GENOMIC DNA]</scope>
    <source>
        <strain>WH7803</strain>
    </source>
</reference>
<comment type="function">
    <text evidence="1">Involved in the synthesis of meso-diaminopimelate (m-DAP or DL-DAP), required for both lysine and peptidoglycan biosynthesis. Catalyzes the direct conversion of tetrahydrodipicolinate to LL-diaminopimelate.</text>
</comment>
<comment type="catalytic activity">
    <reaction evidence="1">
        <text>(2S,6S)-2,6-diaminopimelate + 2-oxoglutarate = (S)-2,3,4,5-tetrahydrodipicolinate + L-glutamate + H2O + H(+)</text>
        <dbReference type="Rhea" id="RHEA:23988"/>
        <dbReference type="ChEBI" id="CHEBI:15377"/>
        <dbReference type="ChEBI" id="CHEBI:15378"/>
        <dbReference type="ChEBI" id="CHEBI:16810"/>
        <dbReference type="ChEBI" id="CHEBI:16845"/>
        <dbReference type="ChEBI" id="CHEBI:29985"/>
        <dbReference type="ChEBI" id="CHEBI:57609"/>
        <dbReference type="EC" id="2.6.1.83"/>
    </reaction>
</comment>
<comment type="cofactor">
    <cofactor evidence="1">
        <name>pyridoxal 5'-phosphate</name>
        <dbReference type="ChEBI" id="CHEBI:597326"/>
    </cofactor>
</comment>
<comment type="pathway">
    <text evidence="1">Amino-acid biosynthesis; L-lysine biosynthesis via DAP pathway; LL-2,6-diaminopimelate from (S)-tetrahydrodipicolinate (aminotransferase route): step 1/1.</text>
</comment>
<comment type="subunit">
    <text evidence="1">Homodimer.</text>
</comment>
<comment type="similarity">
    <text evidence="1">Belongs to the class-I pyridoxal-phosphate-dependent aminotransferase family. LL-diaminopimelate aminotransferase subfamily.</text>
</comment>
<comment type="sequence caution" evidence="2">
    <conflict type="erroneous initiation">
        <sequence resource="EMBL-CDS" id="CAK22796"/>
    </conflict>
</comment>
<keyword id="KW-0032">Aminotransferase</keyword>
<keyword id="KW-0663">Pyridoxal phosphate</keyword>
<keyword id="KW-1185">Reference proteome</keyword>
<keyword id="KW-0808">Transferase</keyword>
<accession>A5GIN1</accession>
<feature type="chain" id="PRO_0000312552" description="LL-diaminopimelate aminotransferase">
    <location>
        <begin position="1"/>
        <end position="408"/>
    </location>
</feature>
<feature type="binding site" evidence="1">
    <location>
        <position position="15"/>
    </location>
    <ligand>
        <name>substrate</name>
    </ligand>
</feature>
<feature type="binding site" evidence="1">
    <location>
        <position position="42"/>
    </location>
    <ligand>
        <name>substrate</name>
    </ligand>
</feature>
<feature type="binding site" evidence="1">
    <location>
        <position position="72"/>
    </location>
    <ligand>
        <name>pyridoxal 5'-phosphate</name>
        <dbReference type="ChEBI" id="CHEBI:597326"/>
    </ligand>
</feature>
<feature type="binding site" evidence="1">
    <location>
        <begin position="108"/>
        <end position="109"/>
    </location>
    <ligand>
        <name>pyridoxal 5'-phosphate</name>
        <dbReference type="ChEBI" id="CHEBI:597326"/>
    </ligand>
</feature>
<feature type="binding site" evidence="1">
    <location>
        <position position="109"/>
    </location>
    <ligand>
        <name>substrate</name>
    </ligand>
</feature>
<feature type="binding site" evidence="1">
    <location>
        <position position="132"/>
    </location>
    <ligand>
        <name>pyridoxal 5'-phosphate</name>
        <dbReference type="ChEBI" id="CHEBI:597326"/>
    </ligand>
</feature>
<feature type="binding site" evidence="1">
    <location>
        <position position="132"/>
    </location>
    <ligand>
        <name>substrate</name>
    </ligand>
</feature>
<feature type="binding site" evidence="1">
    <location>
        <position position="187"/>
    </location>
    <ligand>
        <name>pyridoxal 5'-phosphate</name>
        <dbReference type="ChEBI" id="CHEBI:597326"/>
    </ligand>
</feature>
<feature type="binding site" evidence="1">
    <location>
        <position position="187"/>
    </location>
    <ligand>
        <name>substrate</name>
    </ligand>
</feature>
<feature type="binding site" evidence="1">
    <location>
        <position position="218"/>
    </location>
    <ligand>
        <name>pyridoxal 5'-phosphate</name>
        <dbReference type="ChEBI" id="CHEBI:597326"/>
    </ligand>
</feature>
<feature type="binding site" evidence="1">
    <location>
        <begin position="246"/>
        <end position="248"/>
    </location>
    <ligand>
        <name>pyridoxal 5'-phosphate</name>
        <dbReference type="ChEBI" id="CHEBI:597326"/>
    </ligand>
</feature>
<feature type="binding site" evidence="1">
    <location>
        <position position="257"/>
    </location>
    <ligand>
        <name>pyridoxal 5'-phosphate</name>
        <dbReference type="ChEBI" id="CHEBI:597326"/>
    </ligand>
</feature>
<feature type="binding site" evidence="1">
    <location>
        <position position="292"/>
    </location>
    <ligand>
        <name>pyridoxal 5'-phosphate</name>
        <dbReference type="ChEBI" id="CHEBI:597326"/>
    </ligand>
</feature>
<feature type="binding site" evidence="1">
    <location>
        <position position="292"/>
    </location>
    <ligand>
        <name>substrate</name>
    </ligand>
</feature>
<feature type="binding site" evidence="1">
    <location>
        <position position="388"/>
    </location>
    <ligand>
        <name>substrate</name>
    </ligand>
</feature>
<feature type="modified residue" description="N6-(pyridoxal phosphate)lysine" evidence="1">
    <location>
        <position position="249"/>
    </location>
</feature>
<sequence>MVQVNGNYLKLKAGYLFPEIGRRVKAFSAANPDAALIRLGIGDVTEPLPQACRDAMKTAIDAMGTAEGFHGYGPEQGYGWLREAIATHDFKARGCDISAEEIFVSDGSKCDSSNILDILGEGNRVAVTDPVYPVYVDSNVMAGRTGDAGDEGRYAGLTYLPISADNGFAAQIPSDPVDLIYLCFPNNPTGAVATKEQLKAWVDYARANDALILFDAAYEAFIQDPSLPHSIFEIEGARDCAIEFRSFSKNAGFTGTRCAFTVVPKGLKGKAANGEAVELWSLWNRRQSTKFNGVSYIIQRGAEAVYSEAGQAEVKGLVSFYMENAAIIRRELSAAGLTIYGGEHAPYVWIKTPDGMDSWGFFDHLLNKANVVGTPGSGFGAAGEGYFRLSAFNSRANVDEAMARIKAL</sequence>
<dbReference type="EC" id="2.6.1.83" evidence="1"/>
<dbReference type="EMBL" id="CT971583">
    <property type="protein sequence ID" value="CAK22796.1"/>
    <property type="status" value="ALT_INIT"/>
    <property type="molecule type" value="Genomic_DNA"/>
</dbReference>
<dbReference type="SMR" id="A5GIN1"/>
<dbReference type="STRING" id="32051.SynWH7803_0370"/>
<dbReference type="KEGG" id="syx:SynWH7803_0370"/>
<dbReference type="eggNOG" id="COG0436">
    <property type="taxonomic scope" value="Bacteria"/>
</dbReference>
<dbReference type="HOGENOM" id="CLU_051433_0_0_3"/>
<dbReference type="OrthoDB" id="9802328at2"/>
<dbReference type="UniPathway" id="UPA00034">
    <property type="reaction ID" value="UER00466"/>
</dbReference>
<dbReference type="Proteomes" id="UP000001566">
    <property type="component" value="Chromosome"/>
</dbReference>
<dbReference type="GO" id="GO:0010285">
    <property type="term" value="F:L,L-diaminopimelate aminotransferase activity"/>
    <property type="evidence" value="ECO:0007669"/>
    <property type="project" value="UniProtKB-UniRule"/>
</dbReference>
<dbReference type="GO" id="GO:0030170">
    <property type="term" value="F:pyridoxal phosphate binding"/>
    <property type="evidence" value="ECO:0007669"/>
    <property type="project" value="UniProtKB-UniRule"/>
</dbReference>
<dbReference type="GO" id="GO:0033362">
    <property type="term" value="P:lysine biosynthetic process via diaminopimelate, diaminopimelate-aminotransferase pathway"/>
    <property type="evidence" value="ECO:0007669"/>
    <property type="project" value="UniProtKB-UniRule"/>
</dbReference>
<dbReference type="CDD" id="cd00609">
    <property type="entry name" value="AAT_like"/>
    <property type="match status" value="1"/>
</dbReference>
<dbReference type="FunFam" id="3.40.640.10:FF:000099">
    <property type="entry name" value="LL-diaminopimelate aminotransferase, chloroplastic"/>
    <property type="match status" value="1"/>
</dbReference>
<dbReference type="Gene3D" id="3.90.1150.10">
    <property type="entry name" value="Aspartate Aminotransferase, domain 1"/>
    <property type="match status" value="1"/>
</dbReference>
<dbReference type="Gene3D" id="3.40.640.10">
    <property type="entry name" value="Type I PLP-dependent aspartate aminotransferase-like (Major domain)"/>
    <property type="match status" value="1"/>
</dbReference>
<dbReference type="HAMAP" id="MF_01642">
    <property type="entry name" value="DapL_aminotrans_1"/>
    <property type="match status" value="1"/>
</dbReference>
<dbReference type="InterPro" id="IPR004839">
    <property type="entry name" value="Aminotransferase_I/II_large"/>
</dbReference>
<dbReference type="InterPro" id="IPR019942">
    <property type="entry name" value="DapL/ALD1"/>
</dbReference>
<dbReference type="InterPro" id="IPR015424">
    <property type="entry name" value="PyrdxlP-dep_Trfase"/>
</dbReference>
<dbReference type="InterPro" id="IPR015421">
    <property type="entry name" value="PyrdxlP-dep_Trfase_major"/>
</dbReference>
<dbReference type="InterPro" id="IPR015422">
    <property type="entry name" value="PyrdxlP-dep_Trfase_small"/>
</dbReference>
<dbReference type="NCBIfam" id="TIGR03542">
    <property type="entry name" value="DAPAT_plant"/>
    <property type="match status" value="1"/>
</dbReference>
<dbReference type="PANTHER" id="PTHR43144">
    <property type="entry name" value="AMINOTRANSFERASE"/>
    <property type="match status" value="1"/>
</dbReference>
<dbReference type="Pfam" id="PF00155">
    <property type="entry name" value="Aminotran_1_2"/>
    <property type="match status" value="1"/>
</dbReference>
<dbReference type="SUPFAM" id="SSF53383">
    <property type="entry name" value="PLP-dependent transferases"/>
    <property type="match status" value="1"/>
</dbReference>
<protein>
    <recommendedName>
        <fullName evidence="1">LL-diaminopimelate aminotransferase</fullName>
        <shortName evidence="1">DAP-AT</shortName>
        <shortName evidence="1">DAP-aminotransferase</shortName>
        <shortName evidence="1">LL-DAP-aminotransferase</shortName>
        <ecNumber evidence="1">2.6.1.83</ecNumber>
    </recommendedName>
</protein>
<evidence type="ECO:0000255" key="1">
    <source>
        <dbReference type="HAMAP-Rule" id="MF_01642"/>
    </source>
</evidence>
<evidence type="ECO:0000305" key="2"/>
<name>DAPAT_SYNPW</name>
<proteinExistence type="inferred from homology"/>
<gene>
    <name evidence="1" type="primary">dapL</name>
    <name type="ordered locus">SynWH7803_0370</name>
</gene>